<dbReference type="EMBL" id="Z49286">
    <property type="protein sequence ID" value="CAA89302.1"/>
    <property type="molecule type" value="Genomic_DNA"/>
</dbReference>
<dbReference type="EMBL" id="AY558346">
    <property type="protein sequence ID" value="AAS56672.1"/>
    <property type="molecule type" value="Genomic_DNA"/>
</dbReference>
<dbReference type="EMBL" id="BK006943">
    <property type="protein sequence ID" value="DAA08782.2"/>
    <property type="molecule type" value="Genomic_DNA"/>
</dbReference>
<dbReference type="PIR" id="S56782">
    <property type="entry name" value="S56782"/>
</dbReference>
<dbReference type="RefSeq" id="NP_012523.2">
    <property type="nucleotide sequence ID" value="NM_001181445.2"/>
</dbReference>
<dbReference type="PDB" id="2CKZ">
    <property type="method" value="X-ray"/>
    <property type="resolution" value="3.20 A"/>
    <property type="chains" value="A/C=1-161"/>
</dbReference>
<dbReference type="PDB" id="5FJ8">
    <property type="method" value="EM"/>
    <property type="resolution" value="3.90 A"/>
    <property type="chains" value="D=1-161"/>
</dbReference>
<dbReference type="PDB" id="5FJ9">
    <property type="method" value="EM"/>
    <property type="resolution" value="4.60 A"/>
    <property type="chains" value="D=1-161"/>
</dbReference>
<dbReference type="PDB" id="5FJA">
    <property type="method" value="EM"/>
    <property type="resolution" value="4.65 A"/>
    <property type="chains" value="D=1-161"/>
</dbReference>
<dbReference type="PDB" id="6CNB">
    <property type="method" value="EM"/>
    <property type="resolution" value="4.10 A"/>
    <property type="chains" value="D=1-161"/>
</dbReference>
<dbReference type="PDB" id="6CNC">
    <property type="method" value="EM"/>
    <property type="resolution" value="4.10 A"/>
    <property type="chains" value="D=1-161"/>
</dbReference>
<dbReference type="PDB" id="6CND">
    <property type="method" value="EM"/>
    <property type="resolution" value="4.80 A"/>
    <property type="chains" value="D=1-161"/>
</dbReference>
<dbReference type="PDB" id="6CNF">
    <property type="method" value="EM"/>
    <property type="resolution" value="4.50 A"/>
    <property type="chains" value="D=1-161"/>
</dbReference>
<dbReference type="PDB" id="6EU0">
    <property type="method" value="EM"/>
    <property type="resolution" value="4.00 A"/>
    <property type="chains" value="D=1-161"/>
</dbReference>
<dbReference type="PDB" id="6EU1">
    <property type="method" value="EM"/>
    <property type="resolution" value="3.40 A"/>
    <property type="chains" value="D=1-161"/>
</dbReference>
<dbReference type="PDB" id="6EU2">
    <property type="method" value="EM"/>
    <property type="resolution" value="3.40 A"/>
    <property type="chains" value="D=1-161"/>
</dbReference>
<dbReference type="PDB" id="6EU3">
    <property type="method" value="EM"/>
    <property type="resolution" value="3.30 A"/>
    <property type="chains" value="D=1-161"/>
</dbReference>
<dbReference type="PDB" id="6F40">
    <property type="method" value="EM"/>
    <property type="resolution" value="3.70 A"/>
    <property type="chains" value="D=1-161"/>
</dbReference>
<dbReference type="PDB" id="6F41">
    <property type="method" value="EM"/>
    <property type="resolution" value="4.30 A"/>
    <property type="chains" value="D=1-161"/>
</dbReference>
<dbReference type="PDB" id="6F42">
    <property type="method" value="EM"/>
    <property type="resolution" value="5.50 A"/>
    <property type="chains" value="D=1-161"/>
</dbReference>
<dbReference type="PDB" id="6F44">
    <property type="method" value="EM"/>
    <property type="resolution" value="4.20 A"/>
    <property type="chains" value="D=1-161"/>
</dbReference>
<dbReference type="PDB" id="6TUT">
    <property type="method" value="EM"/>
    <property type="resolution" value="3.25 A"/>
    <property type="chains" value="D=1-161"/>
</dbReference>
<dbReference type="PDB" id="7Z0H">
    <property type="method" value="EM"/>
    <property type="resolution" value="2.60 A"/>
    <property type="chains" value="D=1-161"/>
</dbReference>
<dbReference type="PDB" id="7Z1L">
    <property type="method" value="EM"/>
    <property type="resolution" value="2.80 A"/>
    <property type="chains" value="D=1-161"/>
</dbReference>
<dbReference type="PDB" id="7Z1M">
    <property type="method" value="EM"/>
    <property type="resolution" value="3.40 A"/>
    <property type="chains" value="D=1-161"/>
</dbReference>
<dbReference type="PDB" id="7Z1N">
    <property type="method" value="EM"/>
    <property type="resolution" value="3.90 A"/>
    <property type="chains" value="D=1-161"/>
</dbReference>
<dbReference type="PDB" id="7Z1O">
    <property type="method" value="EM"/>
    <property type="resolution" value="2.70 A"/>
    <property type="chains" value="D=1-161"/>
</dbReference>
<dbReference type="PDB" id="7Z2Z">
    <property type="method" value="EM"/>
    <property type="resolution" value="3.07 A"/>
    <property type="chains" value="D=1-161"/>
</dbReference>
<dbReference type="PDB" id="7Z30">
    <property type="method" value="EM"/>
    <property type="resolution" value="2.90 A"/>
    <property type="chains" value="D=1-161"/>
</dbReference>
<dbReference type="PDB" id="7Z31">
    <property type="method" value="EM"/>
    <property type="resolution" value="2.76 A"/>
    <property type="chains" value="D=1-161"/>
</dbReference>
<dbReference type="PDB" id="8BWS">
    <property type="method" value="EM"/>
    <property type="resolution" value="3.20 A"/>
    <property type="chains" value="D=1-161"/>
</dbReference>
<dbReference type="PDBsum" id="2CKZ"/>
<dbReference type="PDBsum" id="5FJ8"/>
<dbReference type="PDBsum" id="5FJ9"/>
<dbReference type="PDBsum" id="5FJA"/>
<dbReference type="PDBsum" id="6CNB"/>
<dbReference type="PDBsum" id="6CNC"/>
<dbReference type="PDBsum" id="6CND"/>
<dbReference type="PDBsum" id="6CNF"/>
<dbReference type="PDBsum" id="6EU0"/>
<dbReference type="PDBsum" id="6EU1"/>
<dbReference type="PDBsum" id="6EU2"/>
<dbReference type="PDBsum" id="6EU3"/>
<dbReference type="PDBsum" id="6F40"/>
<dbReference type="PDBsum" id="6F41"/>
<dbReference type="PDBsum" id="6F42"/>
<dbReference type="PDBsum" id="6F44"/>
<dbReference type="PDBsum" id="6TUT"/>
<dbReference type="PDBsum" id="7Z0H"/>
<dbReference type="PDBsum" id="7Z1L"/>
<dbReference type="PDBsum" id="7Z1M"/>
<dbReference type="PDBsum" id="7Z1N"/>
<dbReference type="PDBsum" id="7Z1O"/>
<dbReference type="PDBsum" id="7Z2Z"/>
<dbReference type="PDBsum" id="7Z30"/>
<dbReference type="PDBsum" id="7Z31"/>
<dbReference type="PDBsum" id="8BWS"/>
<dbReference type="EMDB" id="EMD-10595"/>
<dbReference type="EMDB" id="EMD-14421"/>
<dbReference type="EMDB" id="EMD-14447"/>
<dbReference type="EMDB" id="EMD-14448"/>
<dbReference type="EMDB" id="EMD-14449"/>
<dbReference type="EMDB" id="EMD-14451"/>
<dbReference type="EMDB" id="EMD-14468"/>
<dbReference type="EMDB" id="EMD-14469"/>
<dbReference type="EMDB" id="EMD-14470"/>
<dbReference type="EMDB" id="EMD-16299"/>
<dbReference type="EMDB" id="EMD-3955"/>
<dbReference type="EMDB" id="EMD-3956"/>
<dbReference type="EMDB" id="EMD-3957"/>
<dbReference type="EMDB" id="EMD-3958"/>
<dbReference type="EMDB" id="EMD-4180"/>
<dbReference type="EMDB" id="EMD-4181"/>
<dbReference type="EMDB" id="EMD-4182"/>
<dbReference type="EMDB" id="EMD-4183"/>
<dbReference type="EMDB" id="EMD-7530"/>
<dbReference type="EMDB" id="EMD-7531"/>
<dbReference type="EMDB" id="EMD-7532"/>
<dbReference type="EMDB" id="EMD-7533"/>
<dbReference type="SMR" id="P47076"/>
<dbReference type="BioGRID" id="33744">
    <property type="interactions" value="221"/>
</dbReference>
<dbReference type="ComplexPortal" id="CPX-2660">
    <property type="entry name" value="DNA-directed RNA polymerase III complex"/>
</dbReference>
<dbReference type="DIP" id="DIP-6745N"/>
<dbReference type="FunCoup" id="P47076">
    <property type="interactions" value="246"/>
</dbReference>
<dbReference type="IntAct" id="P47076">
    <property type="interactions" value="30"/>
</dbReference>
<dbReference type="MINT" id="P47076"/>
<dbReference type="STRING" id="4932.YJL011C"/>
<dbReference type="iPTMnet" id="P47076"/>
<dbReference type="PaxDb" id="4932-YJL011C"/>
<dbReference type="PeptideAtlas" id="P47076"/>
<dbReference type="EnsemblFungi" id="YJL011C_mRNA">
    <property type="protein sequence ID" value="YJL011C"/>
    <property type="gene ID" value="YJL011C"/>
</dbReference>
<dbReference type="GeneID" id="853442"/>
<dbReference type="KEGG" id="sce:YJL011C"/>
<dbReference type="AGR" id="SGD:S000003548"/>
<dbReference type="SGD" id="S000003548">
    <property type="gene designation" value="RPC17"/>
</dbReference>
<dbReference type="VEuPathDB" id="FungiDB:YJL011C"/>
<dbReference type="eggNOG" id="KOG4168">
    <property type="taxonomic scope" value="Eukaryota"/>
</dbReference>
<dbReference type="GeneTree" id="ENSGT00390000014189"/>
<dbReference type="HOGENOM" id="CLU_092529_3_0_1"/>
<dbReference type="InParanoid" id="P47076"/>
<dbReference type="OMA" id="PTNMVHL"/>
<dbReference type="OrthoDB" id="1746530at2759"/>
<dbReference type="BioCyc" id="YEAST:G3O-31487-MONOMER"/>
<dbReference type="Reactome" id="R-SCE-76066">
    <property type="pathway name" value="RNA Polymerase III Transcription Initiation From Type 2 Promoter"/>
</dbReference>
<dbReference type="BioGRID-ORCS" id="853442">
    <property type="hits" value="1 hit in 10 CRISPR screens"/>
</dbReference>
<dbReference type="EvolutionaryTrace" id="P47076"/>
<dbReference type="PRO" id="PR:P47076"/>
<dbReference type="Proteomes" id="UP000002311">
    <property type="component" value="Chromosome X"/>
</dbReference>
<dbReference type="RNAct" id="P47076">
    <property type="molecule type" value="protein"/>
</dbReference>
<dbReference type="GO" id="GO:0005829">
    <property type="term" value="C:cytosol"/>
    <property type="evidence" value="ECO:0000314"/>
    <property type="project" value="SGD"/>
</dbReference>
<dbReference type="GO" id="GO:0005654">
    <property type="term" value="C:nucleoplasm"/>
    <property type="evidence" value="ECO:0000304"/>
    <property type="project" value="Reactome"/>
</dbReference>
<dbReference type="GO" id="GO:0005634">
    <property type="term" value="C:nucleus"/>
    <property type="evidence" value="ECO:0000314"/>
    <property type="project" value="SGD"/>
</dbReference>
<dbReference type="GO" id="GO:0005666">
    <property type="term" value="C:RNA polymerase III complex"/>
    <property type="evidence" value="ECO:0000314"/>
    <property type="project" value="SGD"/>
</dbReference>
<dbReference type="GO" id="GO:0000166">
    <property type="term" value="F:nucleotide binding"/>
    <property type="evidence" value="ECO:0007669"/>
    <property type="project" value="InterPro"/>
</dbReference>
<dbReference type="GO" id="GO:0006386">
    <property type="term" value="P:termination of RNA polymerase III transcription"/>
    <property type="evidence" value="ECO:0000314"/>
    <property type="project" value="ComplexPortal"/>
</dbReference>
<dbReference type="GO" id="GO:0006383">
    <property type="term" value="P:transcription by RNA polymerase III"/>
    <property type="evidence" value="ECO:0000314"/>
    <property type="project" value="ComplexPortal"/>
</dbReference>
<dbReference type="GO" id="GO:0006384">
    <property type="term" value="P:transcription initiation at RNA polymerase III promoter"/>
    <property type="evidence" value="ECO:0000314"/>
    <property type="project" value="ComplexPortal"/>
</dbReference>
<dbReference type="GO" id="GO:0042797">
    <property type="term" value="P:tRNA transcription by RNA polymerase III"/>
    <property type="evidence" value="ECO:0000314"/>
    <property type="project" value="SGD"/>
</dbReference>
<dbReference type="FunFam" id="1.20.1250.40:FF:000011">
    <property type="entry name" value="RNA polymerase C"/>
    <property type="match status" value="1"/>
</dbReference>
<dbReference type="Gene3D" id="1.20.1250.40">
    <property type="match status" value="1"/>
</dbReference>
<dbReference type="Gene3D" id="6.10.140.870">
    <property type="match status" value="1"/>
</dbReference>
<dbReference type="InterPro" id="IPR010997">
    <property type="entry name" value="HRDC-like_sf"/>
</dbReference>
<dbReference type="InterPro" id="IPR005574">
    <property type="entry name" value="Rpb4/RPC9"/>
</dbReference>
<dbReference type="InterPro" id="IPR038324">
    <property type="entry name" value="Rpb4/RPC9_sf"/>
</dbReference>
<dbReference type="InterPro" id="IPR038846">
    <property type="entry name" value="RPC9"/>
</dbReference>
<dbReference type="PANTHER" id="PTHR15561">
    <property type="entry name" value="CALCITONIN GENE-RELATED PEPTIDE-RECEPTOR COMPONENT PROTEIN"/>
    <property type="match status" value="1"/>
</dbReference>
<dbReference type="PANTHER" id="PTHR15561:SF0">
    <property type="entry name" value="DNA-DIRECTED RNA POLYMERASE III SUBUNIT RPC9"/>
    <property type="match status" value="1"/>
</dbReference>
<dbReference type="Pfam" id="PF03874">
    <property type="entry name" value="RNA_pol_Rpb4"/>
    <property type="match status" value="1"/>
</dbReference>
<dbReference type="SUPFAM" id="SSF47819">
    <property type="entry name" value="HRDC-like"/>
    <property type="match status" value="1"/>
</dbReference>
<evidence type="ECO:0000256" key="1">
    <source>
        <dbReference type="SAM" id="MobiDB-lite"/>
    </source>
</evidence>
<evidence type="ECO:0000269" key="2">
    <source>
    </source>
</evidence>
<evidence type="ECO:0000269" key="3">
    <source>
    </source>
</evidence>
<evidence type="ECO:0000269" key="4">
    <source>
    </source>
</evidence>
<evidence type="ECO:0000269" key="5">
    <source>
    </source>
</evidence>
<evidence type="ECO:0000269" key="6">
    <source>
    </source>
</evidence>
<evidence type="ECO:0000305" key="7"/>
<evidence type="ECO:0007829" key="8">
    <source>
        <dbReference type="PDB" id="2CKZ"/>
    </source>
</evidence>
<evidence type="ECO:0007829" key="9">
    <source>
        <dbReference type="PDB" id="6TUT"/>
    </source>
</evidence>
<evidence type="ECO:0007829" key="10">
    <source>
        <dbReference type="PDB" id="7Z31"/>
    </source>
</evidence>
<evidence type="ECO:0007829" key="11">
    <source>
        <dbReference type="PDB" id="8BWS"/>
    </source>
</evidence>
<gene>
    <name type="primary">RPC17</name>
    <name type="ordered locus">YJL011C</name>
    <name type="ORF">J1349</name>
</gene>
<organism>
    <name type="scientific">Saccharomyces cerevisiae (strain ATCC 204508 / S288c)</name>
    <name type="common">Baker's yeast</name>
    <dbReference type="NCBI Taxonomy" id="559292"/>
    <lineage>
        <taxon>Eukaryota</taxon>
        <taxon>Fungi</taxon>
        <taxon>Dikarya</taxon>
        <taxon>Ascomycota</taxon>
        <taxon>Saccharomycotina</taxon>
        <taxon>Saccharomycetes</taxon>
        <taxon>Saccharomycetales</taxon>
        <taxon>Saccharomycetaceae</taxon>
        <taxon>Saccharomyces</taxon>
    </lineage>
</organism>
<name>RPC9_YEAST</name>
<reference key="1">
    <citation type="journal article" date="1996" name="EMBO J.">
        <title>Complete nucleotide sequence of Saccharomyces cerevisiae chromosome X.</title>
        <authorList>
            <person name="Galibert F."/>
            <person name="Alexandraki D."/>
            <person name="Baur A."/>
            <person name="Boles E."/>
            <person name="Chalwatzis N."/>
            <person name="Chuat J.-C."/>
            <person name="Coster F."/>
            <person name="Cziepluch C."/>
            <person name="de Haan M."/>
            <person name="Domdey H."/>
            <person name="Durand P."/>
            <person name="Entian K.-D."/>
            <person name="Gatius M."/>
            <person name="Goffeau A."/>
            <person name="Grivell L.A."/>
            <person name="Hennemann A."/>
            <person name="Herbert C.J."/>
            <person name="Heumann K."/>
            <person name="Hilger F."/>
            <person name="Hollenberg C.P."/>
            <person name="Huang M.-E."/>
            <person name="Jacq C."/>
            <person name="Jauniaux J.-C."/>
            <person name="Katsoulou C."/>
            <person name="Kirchrath L."/>
            <person name="Kleine K."/>
            <person name="Kordes E."/>
            <person name="Koetter P."/>
            <person name="Liebl S."/>
            <person name="Louis E.J."/>
            <person name="Manus V."/>
            <person name="Mewes H.-W."/>
            <person name="Miosga T."/>
            <person name="Obermaier B."/>
            <person name="Perea J."/>
            <person name="Pohl T.M."/>
            <person name="Portetelle D."/>
            <person name="Pujol A."/>
            <person name="Purnelle B."/>
            <person name="Ramezani Rad M."/>
            <person name="Rasmussen S.W."/>
            <person name="Rose M."/>
            <person name="Rossau R."/>
            <person name="Schaaff-Gerstenschlaeger I."/>
            <person name="Smits P.H.M."/>
            <person name="Scarcez T."/>
            <person name="Soriano N."/>
            <person name="To Van D."/>
            <person name="Tzermia M."/>
            <person name="Van Broekhoven A."/>
            <person name="Vandenbol M."/>
            <person name="Wedler H."/>
            <person name="von Wettstein D."/>
            <person name="Wambutt R."/>
            <person name="Zagulski M."/>
            <person name="Zollner A."/>
            <person name="Karpfinger-Hartl L."/>
        </authorList>
    </citation>
    <scope>NUCLEOTIDE SEQUENCE [LARGE SCALE GENOMIC DNA]</scope>
    <source>
        <strain>ATCC 204508 / S288c</strain>
    </source>
</reference>
<reference key="2">
    <citation type="journal article" date="2014" name="G3 (Bethesda)">
        <title>The reference genome sequence of Saccharomyces cerevisiae: Then and now.</title>
        <authorList>
            <person name="Engel S.R."/>
            <person name="Dietrich F.S."/>
            <person name="Fisk D.G."/>
            <person name="Binkley G."/>
            <person name="Balakrishnan R."/>
            <person name="Costanzo M.C."/>
            <person name="Dwight S.S."/>
            <person name="Hitz B.C."/>
            <person name="Karra K."/>
            <person name="Nash R.S."/>
            <person name="Weng S."/>
            <person name="Wong E.D."/>
            <person name="Lloyd P."/>
            <person name="Skrzypek M.S."/>
            <person name="Miyasato S.R."/>
            <person name="Simison M."/>
            <person name="Cherry J.M."/>
        </authorList>
    </citation>
    <scope>GENOME REANNOTATION</scope>
    <scope>SEQUENCE REVISION TO 159</scope>
    <source>
        <strain>ATCC 204508 / S288c</strain>
    </source>
</reference>
<reference key="3">
    <citation type="journal article" date="2007" name="Genome Res.">
        <title>Approaching a complete repository of sequence-verified protein-encoding clones for Saccharomyces cerevisiae.</title>
        <authorList>
            <person name="Hu Y."/>
            <person name="Rolfs A."/>
            <person name="Bhullar B."/>
            <person name="Murthy T.V.S."/>
            <person name="Zhu C."/>
            <person name="Berger M.F."/>
            <person name="Camargo A.A."/>
            <person name="Kelley F."/>
            <person name="McCarron S."/>
            <person name="Jepson D."/>
            <person name="Richardson A."/>
            <person name="Raphael J."/>
            <person name="Moreira D."/>
            <person name="Taycher E."/>
            <person name="Zuo D."/>
            <person name="Mohr S."/>
            <person name="Kane M.F."/>
            <person name="Williamson J."/>
            <person name="Simpson A.J.G."/>
            <person name="Bulyk M.L."/>
            <person name="Harlow E."/>
            <person name="Marsischky G."/>
            <person name="Kolodner R.D."/>
            <person name="LaBaer J."/>
        </authorList>
    </citation>
    <scope>NUCLEOTIDE SEQUENCE [GENOMIC DNA]</scope>
    <source>
        <strain>ATCC 204508 / S288c</strain>
    </source>
</reference>
<reference key="4">
    <citation type="journal article" date="1998" name="Cold Spring Harb. Symp. Quant. Biol.">
        <title>The yeast RNA polymerase III transcription machinery: a paradigm for eukaryotic gene activation.</title>
        <authorList>
            <person name="Chedin S."/>
            <person name="Ferri M.L."/>
            <person name="Peyroche G."/>
            <person name="Andrau J.-C."/>
            <person name="Jourdain S."/>
            <person name="Lefebvre O."/>
            <person name="Werner M."/>
            <person name="Carles C."/>
            <person name="Sentenac A."/>
        </authorList>
    </citation>
    <scope>REVIEW ON THE RNA POL III COMPLEX</scope>
    <scope>PHOSPHORYLATION</scope>
</reference>
<reference key="5">
    <citation type="journal article" date="2000" name="Mol. Cell. Biol.">
        <title>A novel subunit of yeast RNA polymerase III interacts with the TFIIB-related domain of TFIIIB70.</title>
        <authorList>
            <person name="Ferri M.L."/>
            <person name="Peyroche G."/>
            <person name="Siaut M."/>
            <person name="Lefebvre O."/>
            <person name="Carles C."/>
            <person name="Conesa C."/>
            <person name="Sentenac A."/>
        </authorList>
    </citation>
    <scope>IDENTIFICATION IN THE RNA POLYMERASE III COMPLEX</scope>
    <scope>INTERACTION WITH TDS4</scope>
</reference>
<reference key="6">
    <citation type="journal article" date="2003" name="Nature">
        <title>Global analysis of protein localization in budding yeast.</title>
        <authorList>
            <person name="Huh W.-K."/>
            <person name="Falvo J.V."/>
            <person name="Gerke L.C."/>
            <person name="Carroll A.S."/>
            <person name="Howson R.W."/>
            <person name="Weissman J.S."/>
            <person name="O'Shea E.K."/>
        </authorList>
    </citation>
    <scope>SUBCELLULAR LOCATION [LARGE SCALE ANALYSIS]</scope>
</reference>
<reference key="7">
    <citation type="journal article" date="2003" name="Nature">
        <title>Global analysis of protein expression in yeast.</title>
        <authorList>
            <person name="Ghaemmaghami S."/>
            <person name="Huh W.-K."/>
            <person name="Bower K."/>
            <person name="Howson R.W."/>
            <person name="Belle A."/>
            <person name="Dephoure N."/>
            <person name="O'Shea E.K."/>
            <person name="Weissman J.S."/>
        </authorList>
    </citation>
    <scope>LEVEL OF PROTEIN EXPRESSION [LARGE SCALE ANALYSIS]</scope>
</reference>
<reference key="8">
    <citation type="journal article" date="2003" name="Mol. Cell. Biol.">
        <title>An Rpb4/Rpb7-like complex in yeast RNA polymerase III contains the orthologue of mammalian CGRP-RCP.</title>
        <authorList>
            <person name="Siaut M."/>
            <person name="Zaros C."/>
            <person name="Levivier E."/>
            <person name="Ferri M.L."/>
            <person name="Court M."/>
            <person name="Werner M."/>
            <person name="Callebaut I."/>
            <person name="Thuriaux P."/>
            <person name="Sentenac A."/>
            <person name="Conesa C."/>
        </authorList>
    </citation>
    <scope>SUBCELLULAR LOCATION</scope>
    <scope>INTERACTION WITH RPC25</scope>
</reference>
<reference key="9">
    <citation type="journal article" date="2012" name="Proc. Natl. Acad. Sci. U.S.A.">
        <title>N-terminal acetylome analyses and functional insights of the N-terminal acetyltransferase NatB.</title>
        <authorList>
            <person name="Van Damme P."/>
            <person name="Lasa M."/>
            <person name="Polevoda B."/>
            <person name="Gazquez C."/>
            <person name="Elosegui-Artola A."/>
            <person name="Kim D.S."/>
            <person name="De Juan-Pardo E."/>
            <person name="Demeyer K."/>
            <person name="Hole K."/>
            <person name="Larrea E."/>
            <person name="Timmerman E."/>
            <person name="Prieto J."/>
            <person name="Arnesen T."/>
            <person name="Sherman F."/>
            <person name="Gevaert K."/>
            <person name="Aldabe R."/>
        </authorList>
    </citation>
    <scope>IDENTIFICATION BY MASS SPECTROMETRY [LARGE SCALE ANALYSIS]</scope>
</reference>
<reference key="10">
    <citation type="journal article" date="2006" name="Mol. Cell">
        <title>Structural biology of RNA polymerase III: subcomplex C17/25 X-ray structure and 11 subunit enzyme model.</title>
        <authorList>
            <person name="Jasiak A.J."/>
            <person name="Armache K.J."/>
            <person name="Martens B."/>
            <person name="Jansen R.P."/>
            <person name="Cramer P."/>
        </authorList>
    </citation>
    <scope>X-RAY CRYSTALLOGRAPHY (3.2 ANGSTROMS) IN COMPLEX WITH RPC25</scope>
    <scope>3D-STRUCTURE MODELING OF THE POL III CORE COMPLEX</scope>
</reference>
<feature type="chain" id="PRO_0000203077" description="DNA-directed RNA polymerase III subunit RPC9">
    <location>
        <begin position="1"/>
        <end position="161"/>
    </location>
</feature>
<feature type="region of interest" description="Disordered" evidence="1">
    <location>
        <begin position="75"/>
        <end position="96"/>
    </location>
</feature>
<feature type="compositionally biased region" description="Basic and acidic residues" evidence="1">
    <location>
        <begin position="82"/>
        <end position="96"/>
    </location>
</feature>
<feature type="sequence conflict" description="In Ref. 1; CAA89302 and 3; AAS56672." evidence="7" ref="1 3">
    <original>G</original>
    <variation>A</variation>
    <location>
        <position position="159"/>
    </location>
</feature>
<feature type="strand" evidence="10">
    <location>
        <begin position="3"/>
        <end position="6"/>
    </location>
</feature>
<feature type="helix" evidence="10">
    <location>
        <begin position="15"/>
        <end position="26"/>
    </location>
</feature>
<feature type="helix" evidence="10">
    <location>
        <begin position="30"/>
        <end position="33"/>
    </location>
</feature>
<feature type="strand" evidence="11">
    <location>
        <begin position="38"/>
        <end position="41"/>
    </location>
</feature>
<feature type="strand" evidence="10">
    <location>
        <begin position="43"/>
        <end position="47"/>
    </location>
</feature>
<feature type="turn" evidence="10">
    <location>
        <begin position="53"/>
        <end position="55"/>
    </location>
</feature>
<feature type="helix" evidence="10">
    <location>
        <begin position="56"/>
        <end position="67"/>
    </location>
</feature>
<feature type="strand" evidence="10">
    <location>
        <begin position="94"/>
        <end position="97"/>
    </location>
</feature>
<feature type="helix" evidence="10">
    <location>
        <begin position="100"/>
        <end position="104"/>
    </location>
</feature>
<feature type="helix" evidence="10">
    <location>
        <begin position="107"/>
        <end position="110"/>
    </location>
</feature>
<feature type="helix" evidence="9">
    <location>
        <begin position="111"/>
        <end position="113"/>
    </location>
</feature>
<feature type="strand" evidence="10">
    <location>
        <begin position="116"/>
        <end position="118"/>
    </location>
</feature>
<feature type="helix" evidence="10">
    <location>
        <begin position="120"/>
        <end position="123"/>
    </location>
</feature>
<feature type="helix" evidence="10">
    <location>
        <begin position="131"/>
        <end position="137"/>
    </location>
</feature>
<feature type="strand" evidence="8">
    <location>
        <begin position="138"/>
        <end position="140"/>
    </location>
</feature>
<feature type="helix" evidence="10">
    <location>
        <begin position="141"/>
        <end position="144"/>
    </location>
</feature>
<feature type="turn" evidence="9">
    <location>
        <begin position="148"/>
        <end position="150"/>
    </location>
</feature>
<feature type="helix" evidence="10">
    <location>
        <begin position="152"/>
        <end position="157"/>
    </location>
</feature>
<sequence>MKVLEERNAFLSDYEVLKFLTDLEKKHLWDQKSLAALKKSRSKGKQNRPYNHPELQGITRNVVNYLSINKNFINQEDEGEERESSGAKDAEKSGISKMSDESFAELMTKLNSFKLFKAEKLQIVNQLPANMVHLYSIVEECDARFDEKTIEEMLEIISGYA</sequence>
<accession>P47076</accession>
<accession>D6VWG6</accession>
<protein>
    <recommendedName>
        <fullName>DNA-directed RNA polymerase III subunit RPC9</fullName>
        <shortName>RNA polymerase III subunit C9</shortName>
    </recommendedName>
    <alternativeName>
        <fullName>RNA polymerase III subunit C17</fullName>
    </alternativeName>
</protein>
<proteinExistence type="evidence at protein level"/>
<comment type="function">
    <text>DNA-dependent RNA polymerase catalyzes the transcription of DNA into RNA using the four ribonucleoside triphosphates as substrates. Specific peripheric component of RNA polymerase III which synthesizes small RNAs, such as 5S rRNA and tRNAs. The RPC25/RPC8-RPC17/RPC9 subcomplex may bind Pol III transcripts emerging from the adjacent exit pore during elongation.</text>
</comment>
<comment type="subunit">
    <text evidence="2 3 6">Component of the RNA polymerase III (Pol III) complex consisting of 17 subunits. Forms a Pol III subcomplex with RPC25/RPC8. Interacts with BURF1/TDS4.</text>
</comment>
<comment type="interaction">
    <interactant intactId="EBI-25782">
        <id>P47076</id>
    </interactant>
    <interactant intactId="EBI-15802">
        <id>P22139</id>
        <label>RPB10</label>
    </interactant>
    <organismsDiffer>false</organismsDiffer>
    <experiments>2</experiments>
</comment>
<comment type="interaction">
    <interactant intactId="EBI-25782">
        <id>P47076</id>
    </interactant>
    <interactant intactId="EBI-15794">
        <id>P20436</id>
        <label>RPB8</label>
    </interactant>
    <organismsDiffer>false</organismsDiffer>
    <experiments>3</experiments>
</comment>
<comment type="interaction">
    <interactant intactId="EBI-25782">
        <id>P47076</id>
    </interactant>
    <interactant intactId="EBI-15854">
        <id>P35718</id>
        <label>RPC25</label>
    </interactant>
    <organismsDiffer>false</organismsDiffer>
    <experiments>2</experiments>
</comment>
<comment type="interaction">
    <interactant intactId="EBI-25782">
        <id>P47076</id>
    </interactant>
    <interactant intactId="EBI-15835">
        <id>P32910</id>
        <label>RPC34</label>
    </interactant>
    <organismsDiffer>false</organismsDiffer>
    <experiments>3</experiments>
</comment>
<comment type="interaction">
    <interactant intactId="EBI-25782">
        <id>P47076</id>
    </interactant>
    <interactant intactId="EBI-15831">
        <id>P07703</id>
        <label>RPC40</label>
    </interactant>
    <organismsDiffer>false</organismsDiffer>
    <experiments>2</experiments>
</comment>
<comment type="subcellular location">
    <subcellularLocation>
        <location evidence="3 4">Nucleus</location>
    </subcellularLocation>
</comment>
<comment type="miscellaneous">
    <text evidence="5">Present with 2930 molecules/cell in log phase SD medium.</text>
</comment>
<comment type="similarity">
    <text evidence="7">Belongs to the eukaryotic RPC9 RNA polymerase subunit family.</text>
</comment>
<keyword id="KW-0002">3D-structure</keyword>
<keyword id="KW-0240">DNA-directed RNA polymerase</keyword>
<keyword id="KW-0539">Nucleus</keyword>
<keyword id="KW-0597">Phosphoprotein</keyword>
<keyword id="KW-1185">Reference proteome</keyword>
<keyword id="KW-0804">Transcription</keyword>